<feature type="chain" id="PRO_1000114420" description="Small ribosomal subunit protein bS18">
    <location>
        <begin position="1"/>
        <end position="75"/>
    </location>
</feature>
<reference key="1">
    <citation type="journal article" date="2008" name="DNA Res.">
        <title>Complete genome sequence and comparative analysis of the wild-type commensal Escherichia coli strain SE11 isolated from a healthy adult.</title>
        <authorList>
            <person name="Oshima K."/>
            <person name="Toh H."/>
            <person name="Ogura Y."/>
            <person name="Sasamoto H."/>
            <person name="Morita H."/>
            <person name="Park S.-H."/>
            <person name="Ooka T."/>
            <person name="Iyoda S."/>
            <person name="Taylor T.D."/>
            <person name="Hayashi T."/>
            <person name="Itoh K."/>
            <person name="Hattori M."/>
        </authorList>
    </citation>
    <scope>NUCLEOTIDE SEQUENCE [LARGE SCALE GENOMIC DNA]</scope>
    <source>
        <strain>SE11</strain>
    </source>
</reference>
<proteinExistence type="inferred from homology"/>
<gene>
    <name evidence="1" type="primary">rpsR</name>
    <name type="ordered locus">ECSE_4501</name>
</gene>
<evidence type="ECO:0000255" key="1">
    <source>
        <dbReference type="HAMAP-Rule" id="MF_00270"/>
    </source>
</evidence>
<evidence type="ECO:0000305" key="2"/>
<name>RS18_ECOSE</name>
<comment type="function">
    <text evidence="1">Binds as a heterodimer with protein bS6 to the central domain of the 16S rRNA, where it helps stabilize the platform of the 30S subunit.</text>
</comment>
<comment type="subunit">
    <text evidence="1">Part of the 30S ribosomal subunit. Forms a tight heterodimer with protein bS6.</text>
</comment>
<comment type="similarity">
    <text evidence="1">Belongs to the bacterial ribosomal protein bS18 family.</text>
</comment>
<sequence>MARYFRRRKFCRFTAEGVQEIDYKDIATLKNYITESGKIVPSRITGTRAKYQRQLARAIKRARYLSLLPYTDRHQ</sequence>
<keyword id="KW-0687">Ribonucleoprotein</keyword>
<keyword id="KW-0689">Ribosomal protein</keyword>
<keyword id="KW-0694">RNA-binding</keyword>
<keyword id="KW-0699">rRNA-binding</keyword>
<dbReference type="EMBL" id="AP009240">
    <property type="protein sequence ID" value="BAG80025.1"/>
    <property type="molecule type" value="Genomic_DNA"/>
</dbReference>
<dbReference type="RefSeq" id="WP_000135199.1">
    <property type="nucleotide sequence ID" value="NC_011415.1"/>
</dbReference>
<dbReference type="SMR" id="B6I2A8"/>
<dbReference type="GeneID" id="98186237"/>
<dbReference type="KEGG" id="ecy:ECSE_4501"/>
<dbReference type="HOGENOM" id="CLU_148710_2_3_6"/>
<dbReference type="Proteomes" id="UP000008199">
    <property type="component" value="Chromosome"/>
</dbReference>
<dbReference type="GO" id="GO:0022627">
    <property type="term" value="C:cytosolic small ribosomal subunit"/>
    <property type="evidence" value="ECO:0007669"/>
    <property type="project" value="TreeGrafter"/>
</dbReference>
<dbReference type="GO" id="GO:0070181">
    <property type="term" value="F:small ribosomal subunit rRNA binding"/>
    <property type="evidence" value="ECO:0007669"/>
    <property type="project" value="TreeGrafter"/>
</dbReference>
<dbReference type="GO" id="GO:0003735">
    <property type="term" value="F:structural constituent of ribosome"/>
    <property type="evidence" value="ECO:0007669"/>
    <property type="project" value="InterPro"/>
</dbReference>
<dbReference type="GO" id="GO:0006412">
    <property type="term" value="P:translation"/>
    <property type="evidence" value="ECO:0007669"/>
    <property type="project" value="UniProtKB-UniRule"/>
</dbReference>
<dbReference type="FunFam" id="4.10.640.10:FF:000001">
    <property type="entry name" value="30S ribosomal protein S18"/>
    <property type="match status" value="1"/>
</dbReference>
<dbReference type="Gene3D" id="4.10.640.10">
    <property type="entry name" value="Ribosomal protein S18"/>
    <property type="match status" value="1"/>
</dbReference>
<dbReference type="HAMAP" id="MF_00270">
    <property type="entry name" value="Ribosomal_bS18"/>
    <property type="match status" value="1"/>
</dbReference>
<dbReference type="InterPro" id="IPR001648">
    <property type="entry name" value="Ribosomal_bS18"/>
</dbReference>
<dbReference type="InterPro" id="IPR018275">
    <property type="entry name" value="Ribosomal_bS18_CS"/>
</dbReference>
<dbReference type="InterPro" id="IPR036870">
    <property type="entry name" value="Ribosomal_bS18_sf"/>
</dbReference>
<dbReference type="NCBIfam" id="TIGR00165">
    <property type="entry name" value="S18"/>
    <property type="match status" value="1"/>
</dbReference>
<dbReference type="PANTHER" id="PTHR13479">
    <property type="entry name" value="30S RIBOSOMAL PROTEIN S18"/>
    <property type="match status" value="1"/>
</dbReference>
<dbReference type="PANTHER" id="PTHR13479:SF40">
    <property type="entry name" value="SMALL RIBOSOMAL SUBUNIT PROTEIN BS18M"/>
    <property type="match status" value="1"/>
</dbReference>
<dbReference type="Pfam" id="PF01084">
    <property type="entry name" value="Ribosomal_S18"/>
    <property type="match status" value="1"/>
</dbReference>
<dbReference type="PRINTS" id="PR00974">
    <property type="entry name" value="RIBOSOMALS18"/>
</dbReference>
<dbReference type="SUPFAM" id="SSF46911">
    <property type="entry name" value="Ribosomal protein S18"/>
    <property type="match status" value="1"/>
</dbReference>
<dbReference type="PROSITE" id="PS00057">
    <property type="entry name" value="RIBOSOMAL_S18"/>
    <property type="match status" value="1"/>
</dbReference>
<protein>
    <recommendedName>
        <fullName evidence="1">Small ribosomal subunit protein bS18</fullName>
    </recommendedName>
    <alternativeName>
        <fullName evidence="2">30S ribosomal protein S18</fullName>
    </alternativeName>
</protein>
<accession>B6I2A8</accession>
<organism>
    <name type="scientific">Escherichia coli (strain SE11)</name>
    <dbReference type="NCBI Taxonomy" id="409438"/>
    <lineage>
        <taxon>Bacteria</taxon>
        <taxon>Pseudomonadati</taxon>
        <taxon>Pseudomonadota</taxon>
        <taxon>Gammaproteobacteria</taxon>
        <taxon>Enterobacterales</taxon>
        <taxon>Enterobacteriaceae</taxon>
        <taxon>Escherichia</taxon>
    </lineage>
</organism>